<proteinExistence type="inferred from homology"/>
<comment type="function">
    <text evidence="1">Plays an essential role in the initiation and regulation of chromosomal replication. ATP-DnaA binds to the origin of replication (oriC) to initiate formation of the DNA replication initiation complex once per cell cycle. Binds the DnaA box (a 9 base pair repeat at the origin) and separates the double-stranded (ds)DNA. Forms a right-handed helical filament on oriC DNA; dsDNA binds to the exterior of the filament while single-stranded (ss)DNA is stabiized in the filament's interior. The ATP-DnaA-oriC complex binds and stabilizes one strand of the AT-rich DNA unwinding element (DUE), permitting loading of DNA polymerase. After initiation quickly degrades to an ADP-DnaA complex that is not apt for DNA replication. Binds acidic phospholipids.</text>
</comment>
<comment type="subunit">
    <text evidence="1">Oligomerizes as a right-handed, spiral filament on DNA at oriC.</text>
</comment>
<comment type="subcellular location">
    <subcellularLocation>
        <location evidence="1">Cytoplasm</location>
    </subcellularLocation>
</comment>
<comment type="domain">
    <text evidence="1">Domain I is involved in oligomerization and binding regulators, domain II is flexibile and of varying length in different bacteria, domain III forms the AAA+ region, while domain IV binds dsDNA.</text>
</comment>
<comment type="similarity">
    <text evidence="1">Belongs to the DnaA family.</text>
</comment>
<gene>
    <name evidence="1" type="primary">dnaA</name>
    <name type="ordered locus">Bcenmc03_0001</name>
</gene>
<keyword id="KW-0067">ATP-binding</keyword>
<keyword id="KW-0963">Cytoplasm</keyword>
<keyword id="KW-0235">DNA replication</keyword>
<keyword id="KW-0238">DNA-binding</keyword>
<keyword id="KW-0446">Lipid-binding</keyword>
<keyword id="KW-0547">Nucleotide-binding</keyword>
<dbReference type="EMBL" id="CP000958">
    <property type="protein sequence ID" value="ACA89182.1"/>
    <property type="molecule type" value="Genomic_DNA"/>
</dbReference>
<dbReference type="RefSeq" id="WP_012327525.1">
    <property type="nucleotide sequence ID" value="NC_010508.1"/>
</dbReference>
<dbReference type="SMR" id="B1K0Y8"/>
<dbReference type="GeneID" id="83046806"/>
<dbReference type="KEGG" id="bcm:Bcenmc03_0001"/>
<dbReference type="HOGENOM" id="CLU_026910_0_1_4"/>
<dbReference type="Proteomes" id="UP000002169">
    <property type="component" value="Chromosome 1"/>
</dbReference>
<dbReference type="GO" id="GO:0005737">
    <property type="term" value="C:cytoplasm"/>
    <property type="evidence" value="ECO:0007669"/>
    <property type="project" value="UniProtKB-SubCell"/>
</dbReference>
<dbReference type="GO" id="GO:0005886">
    <property type="term" value="C:plasma membrane"/>
    <property type="evidence" value="ECO:0007669"/>
    <property type="project" value="TreeGrafter"/>
</dbReference>
<dbReference type="GO" id="GO:0005524">
    <property type="term" value="F:ATP binding"/>
    <property type="evidence" value="ECO:0007669"/>
    <property type="project" value="UniProtKB-UniRule"/>
</dbReference>
<dbReference type="GO" id="GO:0016887">
    <property type="term" value="F:ATP hydrolysis activity"/>
    <property type="evidence" value="ECO:0007669"/>
    <property type="project" value="InterPro"/>
</dbReference>
<dbReference type="GO" id="GO:0003688">
    <property type="term" value="F:DNA replication origin binding"/>
    <property type="evidence" value="ECO:0007669"/>
    <property type="project" value="UniProtKB-UniRule"/>
</dbReference>
<dbReference type="GO" id="GO:0008289">
    <property type="term" value="F:lipid binding"/>
    <property type="evidence" value="ECO:0007669"/>
    <property type="project" value="UniProtKB-KW"/>
</dbReference>
<dbReference type="GO" id="GO:0006270">
    <property type="term" value="P:DNA replication initiation"/>
    <property type="evidence" value="ECO:0007669"/>
    <property type="project" value="UniProtKB-UniRule"/>
</dbReference>
<dbReference type="GO" id="GO:0006275">
    <property type="term" value="P:regulation of DNA replication"/>
    <property type="evidence" value="ECO:0007669"/>
    <property type="project" value="UniProtKB-UniRule"/>
</dbReference>
<dbReference type="CDD" id="cd00009">
    <property type="entry name" value="AAA"/>
    <property type="match status" value="1"/>
</dbReference>
<dbReference type="CDD" id="cd06571">
    <property type="entry name" value="Bac_DnaA_C"/>
    <property type="match status" value="1"/>
</dbReference>
<dbReference type="FunFam" id="1.10.8.60:FF:000003">
    <property type="entry name" value="Chromosomal replication initiator protein DnaA"/>
    <property type="match status" value="1"/>
</dbReference>
<dbReference type="FunFam" id="3.40.50.300:FF:000668">
    <property type="entry name" value="Chromosomal replication initiator protein DnaA"/>
    <property type="match status" value="1"/>
</dbReference>
<dbReference type="Gene3D" id="1.10.1750.10">
    <property type="match status" value="1"/>
</dbReference>
<dbReference type="Gene3D" id="1.10.8.60">
    <property type="match status" value="1"/>
</dbReference>
<dbReference type="Gene3D" id="3.30.300.180">
    <property type="match status" value="1"/>
</dbReference>
<dbReference type="Gene3D" id="3.40.50.300">
    <property type="entry name" value="P-loop containing nucleotide triphosphate hydrolases"/>
    <property type="match status" value="1"/>
</dbReference>
<dbReference type="HAMAP" id="MF_00377">
    <property type="entry name" value="DnaA_bact"/>
    <property type="match status" value="1"/>
</dbReference>
<dbReference type="InterPro" id="IPR003593">
    <property type="entry name" value="AAA+_ATPase"/>
</dbReference>
<dbReference type="InterPro" id="IPR001957">
    <property type="entry name" value="Chromosome_initiator_DnaA"/>
</dbReference>
<dbReference type="InterPro" id="IPR020591">
    <property type="entry name" value="Chromosome_initiator_DnaA-like"/>
</dbReference>
<dbReference type="InterPro" id="IPR018312">
    <property type="entry name" value="Chromosome_initiator_DnaA_CS"/>
</dbReference>
<dbReference type="InterPro" id="IPR013159">
    <property type="entry name" value="DnaA_C"/>
</dbReference>
<dbReference type="InterPro" id="IPR013317">
    <property type="entry name" value="DnaA_dom"/>
</dbReference>
<dbReference type="InterPro" id="IPR024633">
    <property type="entry name" value="DnaA_N_dom"/>
</dbReference>
<dbReference type="InterPro" id="IPR038454">
    <property type="entry name" value="DnaA_N_sf"/>
</dbReference>
<dbReference type="InterPro" id="IPR027417">
    <property type="entry name" value="P-loop_NTPase"/>
</dbReference>
<dbReference type="InterPro" id="IPR010921">
    <property type="entry name" value="Trp_repressor/repl_initiator"/>
</dbReference>
<dbReference type="NCBIfam" id="TIGR00362">
    <property type="entry name" value="DnaA"/>
    <property type="match status" value="1"/>
</dbReference>
<dbReference type="PANTHER" id="PTHR30050">
    <property type="entry name" value="CHROMOSOMAL REPLICATION INITIATOR PROTEIN DNAA"/>
    <property type="match status" value="1"/>
</dbReference>
<dbReference type="PANTHER" id="PTHR30050:SF2">
    <property type="entry name" value="CHROMOSOMAL REPLICATION INITIATOR PROTEIN DNAA"/>
    <property type="match status" value="1"/>
</dbReference>
<dbReference type="Pfam" id="PF00308">
    <property type="entry name" value="Bac_DnaA"/>
    <property type="match status" value="1"/>
</dbReference>
<dbReference type="Pfam" id="PF08299">
    <property type="entry name" value="Bac_DnaA_C"/>
    <property type="match status" value="1"/>
</dbReference>
<dbReference type="Pfam" id="PF11638">
    <property type="entry name" value="DnaA_N"/>
    <property type="match status" value="1"/>
</dbReference>
<dbReference type="PRINTS" id="PR00051">
    <property type="entry name" value="DNAA"/>
</dbReference>
<dbReference type="SMART" id="SM00382">
    <property type="entry name" value="AAA"/>
    <property type="match status" value="1"/>
</dbReference>
<dbReference type="SMART" id="SM00760">
    <property type="entry name" value="Bac_DnaA_C"/>
    <property type="match status" value="1"/>
</dbReference>
<dbReference type="SUPFAM" id="SSF52540">
    <property type="entry name" value="P-loop containing nucleoside triphosphate hydrolases"/>
    <property type="match status" value="1"/>
</dbReference>
<dbReference type="SUPFAM" id="SSF48295">
    <property type="entry name" value="TrpR-like"/>
    <property type="match status" value="1"/>
</dbReference>
<dbReference type="PROSITE" id="PS01008">
    <property type="entry name" value="DNAA"/>
    <property type="match status" value="1"/>
</dbReference>
<organism>
    <name type="scientific">Burkholderia orbicola (strain MC0-3)</name>
    <dbReference type="NCBI Taxonomy" id="406425"/>
    <lineage>
        <taxon>Bacteria</taxon>
        <taxon>Pseudomonadati</taxon>
        <taxon>Pseudomonadota</taxon>
        <taxon>Betaproteobacteria</taxon>
        <taxon>Burkholderiales</taxon>
        <taxon>Burkholderiaceae</taxon>
        <taxon>Burkholderia</taxon>
        <taxon>Burkholderia cepacia complex</taxon>
        <taxon>Burkholderia orbicola</taxon>
    </lineage>
</organism>
<name>DNAA_BURO0</name>
<reference key="1">
    <citation type="submission" date="2008-02" db="EMBL/GenBank/DDBJ databases">
        <title>Complete sequence of chromosome 1 of Burkholderia cenocepacia MC0-3.</title>
        <authorList>
            <person name="Copeland A."/>
            <person name="Lucas S."/>
            <person name="Lapidus A."/>
            <person name="Barry K."/>
            <person name="Bruce D."/>
            <person name="Goodwin L."/>
            <person name="Glavina del Rio T."/>
            <person name="Dalin E."/>
            <person name="Tice H."/>
            <person name="Pitluck S."/>
            <person name="Chain P."/>
            <person name="Malfatti S."/>
            <person name="Shin M."/>
            <person name="Vergez L."/>
            <person name="Schmutz J."/>
            <person name="Larimer F."/>
            <person name="Land M."/>
            <person name="Hauser L."/>
            <person name="Kyrpides N."/>
            <person name="Mikhailova N."/>
            <person name="Tiedje J."/>
            <person name="Richardson P."/>
        </authorList>
    </citation>
    <scope>NUCLEOTIDE SEQUENCE [LARGE SCALE GENOMIC DNA]</scope>
    <source>
        <strain>MC0-3</strain>
    </source>
</reference>
<evidence type="ECO:0000255" key="1">
    <source>
        <dbReference type="HAMAP-Rule" id="MF_00377"/>
    </source>
</evidence>
<evidence type="ECO:0000256" key="2">
    <source>
        <dbReference type="SAM" id="MobiDB-lite"/>
    </source>
</evidence>
<protein>
    <recommendedName>
        <fullName evidence="1">Chromosomal replication initiator protein DnaA</fullName>
    </recommendedName>
</protein>
<accession>B1K0Y8</accession>
<sequence>MNDFWQHCSALLERELTPQQYVTWIKPLAPVAFDASANTLSIAAPNRFKLDWVKSQFSGRISDLAREFWNTPIEVQFVLDPKAGMRSAAAGAAPAAPRAPLTPNGPAATVAAIAANLTANAAAAPSAPADVPMTPSAAAAHHLNADDADIDLPSLPAHEAAAGRRTWRPGPGAAPANGGEADSMYERSKLNPVLTFDNFVTGKANQLARAAAIQVADNPGISYNPLFLYGGVGLGKTHLIHAIGNQLLLDKAGARIRYIHAEQYVSDVVKAYQRKAFDDFKRYYHSLDLLLIDDIQFFSGKSRTQEEFFYAFEALVANKAQVIITSDTYPKEISGIDDRLISRFDSGLTVAIEPPELEMRVAILMRKAQSEGVNLSEDVAFFVAKHLRSNVRELEGALRKILAYSKFHGREISIELTKEALKDLLTVQNRQISVENIQKTVADFYNIKVADMYSKKRPANIARPRQIAMYLAKELTQKSLPEIGELFGGRDHTTVLHAVRKIADERSKDAQLNHELHVLEQTLKG</sequence>
<feature type="chain" id="PRO_1000121956" description="Chromosomal replication initiator protein DnaA">
    <location>
        <begin position="1"/>
        <end position="525"/>
    </location>
</feature>
<feature type="region of interest" description="Domain I, interacts with DnaA modulators" evidence="1">
    <location>
        <begin position="1"/>
        <end position="71"/>
    </location>
</feature>
<feature type="region of interest" description="Domain II" evidence="1">
    <location>
        <begin position="71"/>
        <end position="188"/>
    </location>
</feature>
<feature type="region of interest" description="Disordered" evidence="2">
    <location>
        <begin position="160"/>
        <end position="182"/>
    </location>
</feature>
<feature type="region of interest" description="Domain III, AAA+ region" evidence="1">
    <location>
        <begin position="189"/>
        <end position="405"/>
    </location>
</feature>
<feature type="region of interest" description="Domain IV, binds dsDNA" evidence="1">
    <location>
        <begin position="406"/>
        <end position="525"/>
    </location>
</feature>
<feature type="compositionally biased region" description="Low complexity" evidence="2">
    <location>
        <begin position="169"/>
        <end position="181"/>
    </location>
</feature>
<feature type="binding site" evidence="1">
    <location>
        <position position="233"/>
    </location>
    <ligand>
        <name>ATP</name>
        <dbReference type="ChEBI" id="CHEBI:30616"/>
    </ligand>
</feature>
<feature type="binding site" evidence="1">
    <location>
        <position position="235"/>
    </location>
    <ligand>
        <name>ATP</name>
        <dbReference type="ChEBI" id="CHEBI:30616"/>
    </ligand>
</feature>
<feature type="binding site" evidence="1">
    <location>
        <position position="236"/>
    </location>
    <ligand>
        <name>ATP</name>
        <dbReference type="ChEBI" id="CHEBI:30616"/>
    </ligand>
</feature>
<feature type="binding site" evidence="1">
    <location>
        <position position="237"/>
    </location>
    <ligand>
        <name>ATP</name>
        <dbReference type="ChEBI" id="CHEBI:30616"/>
    </ligand>
</feature>